<sequence>MTQLYPQYKKQLTTKIVLFSALSLLMMASLPNTYAEQYPDVPVPFKNGTGGKVENSLYVGLGSAGVSWFRLDTDKTGAGWQKVANFPGQPREQAVTVVLAGKLYVFGGVGKTNANDTQVRALDDAYRFDPQTNQWQQLATRAPRGLVGTVATTLDGSQAVLLGGVNKAIFDGYFTDLASAGSDEVRKSAVINAYFNQAPADYFYNRDVLIYDPQKNQWKSGGLLPFLGTAGSAISRMDNRLILINGEIKPGLRTAAVWQGLMQGNVLEWQPQPDLIGAETGSAQEGLAGAFSGISHKTVLVAGGANFPGAWKQFNRGHLYAHQGLEKQWHQQVYALVDNQWRIAGKLPQPLGYGVSIQGPDKVILIGGETTGGTATSAVTQLSWQGGKLHIE</sequence>
<feature type="signal peptide" evidence="1">
    <location>
        <begin position="1"/>
        <end position="35"/>
    </location>
</feature>
<feature type="chain" id="PRO_5000236704" description="N-acetylneuraminate epimerase">
    <location>
        <begin position="36"/>
        <end position="392"/>
    </location>
</feature>
<feature type="repeat" description="Kelch 1">
    <location>
        <begin position="56"/>
        <end position="100"/>
    </location>
</feature>
<feature type="repeat" description="Kelch 2">
    <location>
        <begin position="102"/>
        <end position="155"/>
    </location>
</feature>
<feature type="repeat" description="Kelch 3">
    <location>
        <begin position="157"/>
        <end position="192"/>
    </location>
</feature>
<feature type="repeat" description="Kelch 4">
    <location>
        <begin position="193"/>
        <end position="238"/>
    </location>
</feature>
<feature type="repeat" description="Kelch 5">
    <location>
        <begin position="241"/>
        <end position="290"/>
    </location>
</feature>
<feature type="repeat" description="Kelch 6">
    <location>
        <begin position="312"/>
        <end position="361"/>
    </location>
</feature>
<feature type="repeat" description="Kelch 7">
    <location>
        <begin position="363"/>
        <end position="392"/>
    </location>
</feature>
<feature type="active site" description="Proton acceptor" evidence="1">
    <location>
        <position position="247"/>
    </location>
</feature>
<name>NANM_YERPP</name>
<accession>A4TK48</accession>
<reference key="1">
    <citation type="submission" date="2007-02" db="EMBL/GenBank/DDBJ databases">
        <title>Complete sequence of chromosome of Yersinia pestis Pestoides F.</title>
        <authorList>
            <consortium name="US DOE Joint Genome Institute"/>
            <person name="Copeland A."/>
            <person name="Lucas S."/>
            <person name="Lapidus A."/>
            <person name="Barry K."/>
            <person name="Detter J.C."/>
            <person name="Glavina del Rio T."/>
            <person name="Hammon N."/>
            <person name="Israni S."/>
            <person name="Dalin E."/>
            <person name="Tice H."/>
            <person name="Pitluck S."/>
            <person name="Di Bartolo G."/>
            <person name="Chain P."/>
            <person name="Malfatti S."/>
            <person name="Shin M."/>
            <person name="Vergez L."/>
            <person name="Schmutz J."/>
            <person name="Larimer F."/>
            <person name="Land M."/>
            <person name="Hauser L."/>
            <person name="Worsham P."/>
            <person name="Chu M."/>
            <person name="Bearden S."/>
            <person name="Garcia E."/>
            <person name="Richardson P."/>
        </authorList>
    </citation>
    <scope>NUCLEOTIDE SEQUENCE [LARGE SCALE GENOMIC DNA]</scope>
    <source>
        <strain>Pestoides F</strain>
    </source>
</reference>
<gene>
    <name evidence="1" type="primary">nanM</name>
    <name type="ordered locus">YPDSF_1267</name>
</gene>
<evidence type="ECO:0000255" key="1">
    <source>
        <dbReference type="HAMAP-Rule" id="MF_01195"/>
    </source>
</evidence>
<protein>
    <recommendedName>
        <fullName evidence="1">N-acetylneuraminate epimerase</fullName>
        <ecNumber evidence="1">5.1.3.24</ecNumber>
    </recommendedName>
    <alternativeName>
        <fullName evidence="1">N-acetylneuraminate mutarotase</fullName>
        <shortName evidence="1">Neu5Ac mutarotase</shortName>
    </alternativeName>
    <alternativeName>
        <fullName evidence="1">Sialic acid epimerase</fullName>
    </alternativeName>
</protein>
<comment type="function">
    <text evidence="1">Converts alpha-N-acetylneuranimic acid (Neu5Ac) to the beta-anomer, accelerating the equilibrium between the alpha- and beta-anomers. Probably facilitates sialidase-negative bacteria to compete successfully for limited amounts of extracellular Neu5Ac, which is likely taken up in the beta-anomer. In addition, the rapid removal of sialic acid from solution might be advantageous to the bacterium to damp down host responses.</text>
</comment>
<comment type="catalytic activity">
    <reaction evidence="1">
        <text>N-acetyl-alpha-neuraminate = N-acetyl-beta-neuraminate</text>
        <dbReference type="Rhea" id="RHEA:25233"/>
        <dbReference type="ChEBI" id="CHEBI:58705"/>
        <dbReference type="ChEBI" id="CHEBI:58770"/>
        <dbReference type="EC" id="5.1.3.24"/>
    </reaction>
</comment>
<comment type="subunit">
    <text evidence="1">Homodimer.</text>
</comment>
<comment type="subcellular location">
    <subcellularLocation>
        <location evidence="1">Periplasm</location>
    </subcellularLocation>
</comment>
<comment type="similarity">
    <text evidence="1">Belongs to the NanM family.</text>
</comment>
<organism>
    <name type="scientific">Yersinia pestis (strain Pestoides F)</name>
    <dbReference type="NCBI Taxonomy" id="386656"/>
    <lineage>
        <taxon>Bacteria</taxon>
        <taxon>Pseudomonadati</taxon>
        <taxon>Pseudomonadota</taxon>
        <taxon>Gammaproteobacteria</taxon>
        <taxon>Enterobacterales</taxon>
        <taxon>Yersiniaceae</taxon>
        <taxon>Yersinia</taxon>
    </lineage>
</organism>
<proteinExistence type="inferred from homology"/>
<keyword id="KW-0119">Carbohydrate metabolism</keyword>
<keyword id="KW-0413">Isomerase</keyword>
<keyword id="KW-0880">Kelch repeat</keyword>
<keyword id="KW-0574">Periplasm</keyword>
<keyword id="KW-0677">Repeat</keyword>
<keyword id="KW-0732">Signal</keyword>
<dbReference type="EC" id="5.1.3.24" evidence="1"/>
<dbReference type="EMBL" id="CP000668">
    <property type="protein sequence ID" value="ABP39660.1"/>
    <property type="molecule type" value="Genomic_DNA"/>
</dbReference>
<dbReference type="RefSeq" id="WP_002211169.1">
    <property type="nucleotide sequence ID" value="NZ_CP009715.1"/>
</dbReference>
<dbReference type="SMR" id="A4TK48"/>
<dbReference type="KEGG" id="ypp:YPDSF_1267"/>
<dbReference type="PATRIC" id="fig|386656.14.peg.2538"/>
<dbReference type="GO" id="GO:0042597">
    <property type="term" value="C:periplasmic space"/>
    <property type="evidence" value="ECO:0007669"/>
    <property type="project" value="UniProtKB-SubCell"/>
</dbReference>
<dbReference type="GO" id="GO:0016857">
    <property type="term" value="F:racemase and epimerase activity, acting on carbohydrates and derivatives"/>
    <property type="evidence" value="ECO:0007669"/>
    <property type="project" value="UniProtKB-UniRule"/>
</dbReference>
<dbReference type="Gene3D" id="2.120.10.80">
    <property type="entry name" value="Kelch-type beta propeller"/>
    <property type="match status" value="1"/>
</dbReference>
<dbReference type="HAMAP" id="MF_01195">
    <property type="entry name" value="NanM"/>
    <property type="match status" value="1"/>
</dbReference>
<dbReference type="InterPro" id="IPR015915">
    <property type="entry name" value="Kelch-typ_b-propeller"/>
</dbReference>
<dbReference type="InterPro" id="IPR056734">
    <property type="entry name" value="NANM"/>
</dbReference>
<dbReference type="InterPro" id="IPR019936">
    <property type="entry name" value="NanM_proteobact"/>
</dbReference>
<dbReference type="NCBIfam" id="TIGR03547">
    <property type="entry name" value="muta_rot_YjhT"/>
    <property type="match status" value="1"/>
</dbReference>
<dbReference type="NCBIfam" id="NF010730">
    <property type="entry name" value="PRK14131.1"/>
    <property type="match status" value="1"/>
</dbReference>
<dbReference type="PANTHER" id="PTHR24412">
    <property type="entry name" value="KELCH PROTEIN"/>
    <property type="match status" value="1"/>
</dbReference>
<dbReference type="PANTHER" id="PTHR24412:SF441">
    <property type="entry name" value="KELCH-LIKE PROTEIN 28"/>
    <property type="match status" value="1"/>
</dbReference>
<dbReference type="Pfam" id="PF24996">
    <property type="entry name" value="NANM"/>
    <property type="match status" value="1"/>
</dbReference>
<dbReference type="SUPFAM" id="SSF117281">
    <property type="entry name" value="Kelch motif"/>
    <property type="match status" value="1"/>
</dbReference>